<protein>
    <recommendedName>
        <fullName evidence="1">Glyceraldehyde-3-phosphate dehydrogenase</fullName>
        <shortName evidence="1">GAPDH</shortName>
        <ecNumber evidence="1">1.2.1.59</ecNumber>
    </recommendedName>
    <alternativeName>
        <fullName evidence="1">NAD(P)-dependent glyceraldehyde-3-phosphate dehydrogenase</fullName>
    </alternativeName>
</protein>
<dbReference type="EC" id="1.2.1.59" evidence="1"/>
<dbReference type="EMBL" id="CP000077">
    <property type="protein sequence ID" value="AAY80691.1"/>
    <property type="molecule type" value="Genomic_DNA"/>
</dbReference>
<dbReference type="RefSeq" id="WP_011278193.1">
    <property type="nucleotide sequence ID" value="NC_007181.1"/>
</dbReference>
<dbReference type="SMR" id="Q4J940"/>
<dbReference type="STRING" id="330779.Saci_1356"/>
<dbReference type="GeneID" id="14551859"/>
<dbReference type="KEGG" id="sai:Saci_1356"/>
<dbReference type="PATRIC" id="fig|330779.12.peg.1309"/>
<dbReference type="eggNOG" id="arCOG00493">
    <property type="taxonomic scope" value="Archaea"/>
</dbReference>
<dbReference type="HOGENOM" id="CLU_069533_0_0_2"/>
<dbReference type="UniPathway" id="UPA00109">
    <property type="reaction ID" value="UER00184"/>
</dbReference>
<dbReference type="Proteomes" id="UP000001018">
    <property type="component" value="Chromosome"/>
</dbReference>
<dbReference type="GO" id="GO:0005737">
    <property type="term" value="C:cytoplasm"/>
    <property type="evidence" value="ECO:0007669"/>
    <property type="project" value="UniProtKB-SubCell"/>
</dbReference>
<dbReference type="GO" id="GO:0008839">
    <property type="term" value="F:4-hydroxy-tetrahydrodipicolinate reductase"/>
    <property type="evidence" value="ECO:0007669"/>
    <property type="project" value="InterPro"/>
</dbReference>
<dbReference type="GO" id="GO:0004365">
    <property type="term" value="F:glyceraldehyde-3-phosphate dehydrogenase (NAD+) (phosphorylating) activity"/>
    <property type="evidence" value="ECO:0007669"/>
    <property type="project" value="UniProtKB-UniRule"/>
</dbReference>
<dbReference type="GO" id="GO:0047100">
    <property type="term" value="F:glyceraldehyde-3-phosphate dehydrogenase (NADP+) (phosphorylating) activity"/>
    <property type="evidence" value="ECO:0007669"/>
    <property type="project" value="RHEA"/>
</dbReference>
<dbReference type="GO" id="GO:0051287">
    <property type="term" value="F:NAD binding"/>
    <property type="evidence" value="ECO:0007669"/>
    <property type="project" value="InterPro"/>
</dbReference>
<dbReference type="GO" id="GO:0050661">
    <property type="term" value="F:NADP binding"/>
    <property type="evidence" value="ECO:0007669"/>
    <property type="project" value="InterPro"/>
</dbReference>
<dbReference type="GO" id="GO:0006096">
    <property type="term" value="P:glycolytic process"/>
    <property type="evidence" value="ECO:0007669"/>
    <property type="project" value="UniProtKB-UniRule"/>
</dbReference>
<dbReference type="GO" id="GO:0009089">
    <property type="term" value="P:lysine biosynthetic process via diaminopimelate"/>
    <property type="evidence" value="ECO:0007669"/>
    <property type="project" value="InterPro"/>
</dbReference>
<dbReference type="CDD" id="cd18127">
    <property type="entry name" value="GAPDH_II_C"/>
    <property type="match status" value="1"/>
</dbReference>
<dbReference type="CDD" id="cd02278">
    <property type="entry name" value="GAPDH_II_N"/>
    <property type="match status" value="1"/>
</dbReference>
<dbReference type="Gene3D" id="3.30.360.10">
    <property type="entry name" value="Dihydrodipicolinate Reductase, domain 2"/>
    <property type="match status" value="1"/>
</dbReference>
<dbReference type="Gene3D" id="3.40.50.720">
    <property type="entry name" value="NAD(P)-binding Rossmann-like Domain"/>
    <property type="match status" value="1"/>
</dbReference>
<dbReference type="HAMAP" id="MF_00559">
    <property type="entry name" value="G3P_dehdrog_arch"/>
    <property type="match status" value="1"/>
</dbReference>
<dbReference type="InterPro" id="IPR000846">
    <property type="entry name" value="DapB_N"/>
</dbReference>
<dbReference type="InterPro" id="IPR020831">
    <property type="entry name" value="GlycerAld/Erythrose_P_DH"/>
</dbReference>
<dbReference type="InterPro" id="IPR020830">
    <property type="entry name" value="GlycerAld_3-P_DH_AS"/>
</dbReference>
<dbReference type="InterPro" id="IPR020829">
    <property type="entry name" value="GlycerAld_3-P_DH_cat"/>
</dbReference>
<dbReference type="InterPro" id="IPR020828">
    <property type="entry name" value="GlycerAld_3-P_DH_NAD(P)-bd"/>
</dbReference>
<dbReference type="InterPro" id="IPR006436">
    <property type="entry name" value="Glyceraldehyde-3-P_DH_2_arc"/>
</dbReference>
<dbReference type="InterPro" id="IPR036291">
    <property type="entry name" value="NAD(P)-bd_dom_sf"/>
</dbReference>
<dbReference type="NCBIfam" id="TIGR01546">
    <property type="entry name" value="GAPDH-II_archae"/>
    <property type="match status" value="1"/>
</dbReference>
<dbReference type="NCBIfam" id="NF003251">
    <property type="entry name" value="PRK04207.1"/>
    <property type="match status" value="1"/>
</dbReference>
<dbReference type="Pfam" id="PF01113">
    <property type="entry name" value="DapB_N"/>
    <property type="match status" value="1"/>
</dbReference>
<dbReference type="Pfam" id="PF02800">
    <property type="entry name" value="Gp_dh_C"/>
    <property type="match status" value="1"/>
</dbReference>
<dbReference type="PIRSF" id="PIRSF000149">
    <property type="entry name" value="GAP_DH"/>
    <property type="match status" value="1"/>
</dbReference>
<dbReference type="SMART" id="SM00846">
    <property type="entry name" value="Gp_dh_N"/>
    <property type="match status" value="1"/>
</dbReference>
<dbReference type="SUPFAM" id="SSF55347">
    <property type="entry name" value="Glyceraldehyde-3-phosphate dehydrogenase-like, C-terminal domain"/>
    <property type="match status" value="1"/>
</dbReference>
<dbReference type="SUPFAM" id="SSF51735">
    <property type="entry name" value="NAD(P)-binding Rossmann-fold domains"/>
    <property type="match status" value="1"/>
</dbReference>
<dbReference type="PROSITE" id="PS00071">
    <property type="entry name" value="GAPDH"/>
    <property type="match status" value="1"/>
</dbReference>
<keyword id="KW-0963">Cytoplasm</keyword>
<keyword id="KW-0324">Glycolysis</keyword>
<keyword id="KW-0520">NAD</keyword>
<keyword id="KW-0521">NADP</keyword>
<keyword id="KW-0560">Oxidoreductase</keyword>
<keyword id="KW-1185">Reference proteome</keyword>
<comment type="catalytic activity">
    <reaction evidence="1">
        <text>D-glyceraldehyde 3-phosphate + phosphate + NADP(+) = (2R)-3-phospho-glyceroyl phosphate + NADPH + H(+)</text>
        <dbReference type="Rhea" id="RHEA:10296"/>
        <dbReference type="ChEBI" id="CHEBI:15378"/>
        <dbReference type="ChEBI" id="CHEBI:43474"/>
        <dbReference type="ChEBI" id="CHEBI:57604"/>
        <dbReference type="ChEBI" id="CHEBI:57783"/>
        <dbReference type="ChEBI" id="CHEBI:58349"/>
        <dbReference type="ChEBI" id="CHEBI:59776"/>
        <dbReference type="EC" id="1.2.1.59"/>
    </reaction>
</comment>
<comment type="catalytic activity">
    <reaction evidence="1">
        <text>D-glyceraldehyde 3-phosphate + phosphate + NAD(+) = (2R)-3-phospho-glyceroyl phosphate + NADH + H(+)</text>
        <dbReference type="Rhea" id="RHEA:10300"/>
        <dbReference type="ChEBI" id="CHEBI:15378"/>
        <dbReference type="ChEBI" id="CHEBI:43474"/>
        <dbReference type="ChEBI" id="CHEBI:57540"/>
        <dbReference type="ChEBI" id="CHEBI:57604"/>
        <dbReference type="ChEBI" id="CHEBI:57945"/>
        <dbReference type="ChEBI" id="CHEBI:59776"/>
        <dbReference type="EC" id="1.2.1.59"/>
    </reaction>
</comment>
<comment type="pathway">
    <text evidence="1">Carbohydrate degradation; glycolysis; pyruvate from D-glyceraldehyde 3-phosphate: step 1/5.</text>
</comment>
<comment type="subunit">
    <text evidence="1">Homotetramer.</text>
</comment>
<comment type="subcellular location">
    <subcellularLocation>
        <location evidence="1">Cytoplasm</location>
    </subcellularLocation>
</comment>
<comment type="similarity">
    <text evidence="1">Belongs to the glyceraldehyde-3-phosphate dehydrogenase family.</text>
</comment>
<reference key="1">
    <citation type="journal article" date="2005" name="J. Bacteriol.">
        <title>The genome of Sulfolobus acidocaldarius, a model organism of the Crenarchaeota.</title>
        <authorList>
            <person name="Chen L."/>
            <person name="Bruegger K."/>
            <person name="Skovgaard M."/>
            <person name="Redder P."/>
            <person name="She Q."/>
            <person name="Torarinsson E."/>
            <person name="Greve B."/>
            <person name="Awayez M."/>
            <person name="Zibat A."/>
            <person name="Klenk H.-P."/>
            <person name="Garrett R.A."/>
        </authorList>
    </citation>
    <scope>NUCLEOTIDE SEQUENCE [LARGE SCALE GENOMIC DNA]</scope>
    <source>
        <strain>ATCC 33909 / DSM 639 / JCM 8929 / NBRC 15157 / NCIMB 11770</strain>
    </source>
</reference>
<evidence type="ECO:0000255" key="1">
    <source>
        <dbReference type="HAMAP-Rule" id="MF_00559"/>
    </source>
</evidence>
<sequence>MVKVKVAINGYGTIGKRVADAIRLQPDMELIGVAKTSPNYEAFTAMRKGYKLYTTKENIQKFQNSGINVAGSIEDMIKDSDIIIDATPGGVGANYKKIYQEYGKKAIFQGGEKSDVADVSFSALCNYNDAINKNYIRVVSCNTTGILRVLCTINNFDKIEKVRGTIVRRAADPKEVKKGPINSIVADPARIPSHHAKDVLTVLKGIDIITSALVAPTTLMHLHTLFITTRNKVSKEDLLNILSNTPRILLLNTEKADAESTAEIMEIARDLGRYRNDVPETVIFEDSIYTNGNEIFLMYGVHQESIVVPENIDAIRASLNIMSRDESIRLTNETLKIGKGYLI</sequence>
<accession>Q4J940</accession>
<name>G3P_SULAC</name>
<feature type="chain" id="PRO_0000145734" description="Glyceraldehyde-3-phosphate dehydrogenase">
    <location>
        <begin position="1"/>
        <end position="343"/>
    </location>
</feature>
<feature type="active site" description="Nucleophile" evidence="1">
    <location>
        <position position="141"/>
    </location>
</feature>
<feature type="binding site" evidence="1">
    <location>
        <begin position="13"/>
        <end position="14"/>
    </location>
    <ligand>
        <name>NAD(+)</name>
        <dbReference type="ChEBI" id="CHEBI:57540"/>
    </ligand>
</feature>
<feature type="binding site" evidence="1">
    <location>
        <position position="111"/>
    </location>
    <ligand>
        <name>NAD(+)</name>
        <dbReference type="ChEBI" id="CHEBI:57540"/>
    </ligand>
</feature>
<feature type="binding site" evidence="1">
    <location>
        <begin position="140"/>
        <end position="142"/>
    </location>
    <ligand>
        <name>D-glyceraldehyde 3-phosphate</name>
        <dbReference type="ChEBI" id="CHEBI:59776"/>
    </ligand>
</feature>
<feature type="binding site" evidence="1">
    <location>
        <position position="169"/>
    </location>
    <ligand>
        <name>NAD(+)</name>
        <dbReference type="ChEBI" id="CHEBI:57540"/>
    </ligand>
</feature>
<feature type="binding site" evidence="1">
    <location>
        <begin position="195"/>
        <end position="196"/>
    </location>
    <ligand>
        <name>D-glyceraldehyde 3-phosphate</name>
        <dbReference type="ChEBI" id="CHEBI:59776"/>
    </ligand>
</feature>
<feature type="binding site" evidence="1">
    <location>
        <position position="303"/>
    </location>
    <ligand>
        <name>NAD(+)</name>
        <dbReference type="ChEBI" id="CHEBI:57540"/>
    </ligand>
</feature>
<proteinExistence type="inferred from homology"/>
<organism>
    <name type="scientific">Sulfolobus acidocaldarius (strain ATCC 33909 / DSM 639 / JCM 8929 / NBRC 15157 / NCIMB 11770)</name>
    <dbReference type="NCBI Taxonomy" id="330779"/>
    <lineage>
        <taxon>Archaea</taxon>
        <taxon>Thermoproteota</taxon>
        <taxon>Thermoprotei</taxon>
        <taxon>Sulfolobales</taxon>
        <taxon>Sulfolobaceae</taxon>
        <taxon>Sulfolobus</taxon>
    </lineage>
</organism>
<gene>
    <name evidence="1" type="primary">gap</name>
    <name type="ordered locus">Saci_1356</name>
</gene>